<dbReference type="EC" id="3.4.24.16" evidence="4 6"/>
<dbReference type="EMBL" id="X87157">
    <property type="protein sequence ID" value="CAA60630.1"/>
    <property type="molecule type" value="mRNA"/>
</dbReference>
<dbReference type="EMBL" id="BC072687">
    <property type="protein sequence ID" value="AAH72687.1"/>
    <property type="molecule type" value="mRNA"/>
</dbReference>
<dbReference type="RefSeq" id="NP_446422.2">
    <property type="nucleotide sequence ID" value="NM_053970.2"/>
</dbReference>
<dbReference type="PDB" id="1I1I">
    <property type="method" value="X-ray"/>
    <property type="resolution" value="2.30 A"/>
    <property type="chains" value="P=24-704"/>
</dbReference>
<dbReference type="PDB" id="2O3E">
    <property type="method" value="X-ray"/>
    <property type="resolution" value="2.20 A"/>
    <property type="chains" value="A=24-701"/>
</dbReference>
<dbReference type="PDB" id="4FXY">
    <property type="method" value="X-ray"/>
    <property type="resolution" value="2.80 A"/>
    <property type="chains" value="P/Q=24-704"/>
</dbReference>
<dbReference type="PDBsum" id="1I1I"/>
<dbReference type="PDBsum" id="2O3E"/>
<dbReference type="PDBsum" id="4FXY"/>
<dbReference type="SMR" id="P42676"/>
<dbReference type="FunCoup" id="P42676">
    <property type="interactions" value="1699"/>
</dbReference>
<dbReference type="STRING" id="10116.ENSRNOP00000059652"/>
<dbReference type="BindingDB" id="P42676"/>
<dbReference type="ChEMBL" id="CHEMBL5169134"/>
<dbReference type="MEROPS" id="M03.002"/>
<dbReference type="GlyGen" id="P42676">
    <property type="glycosylation" value="1 site"/>
</dbReference>
<dbReference type="iPTMnet" id="P42676"/>
<dbReference type="PhosphoSitePlus" id="P42676"/>
<dbReference type="SwissPalm" id="P42676"/>
<dbReference type="jPOST" id="P42676"/>
<dbReference type="PaxDb" id="10116-ENSRNOP00000059652"/>
<dbReference type="GeneID" id="117041"/>
<dbReference type="KEGG" id="rno:117041"/>
<dbReference type="UCSC" id="RGD:621518">
    <property type="organism name" value="rat"/>
</dbReference>
<dbReference type="AGR" id="RGD:621518"/>
<dbReference type="CTD" id="57486"/>
<dbReference type="RGD" id="621518">
    <property type="gene designation" value="Nln"/>
</dbReference>
<dbReference type="eggNOG" id="KOG2089">
    <property type="taxonomic scope" value="Eukaryota"/>
</dbReference>
<dbReference type="InParanoid" id="P42676"/>
<dbReference type="PhylomeDB" id="P42676"/>
<dbReference type="TreeFam" id="TF300459"/>
<dbReference type="BRENDA" id="3.4.24.16">
    <property type="organism ID" value="5301"/>
</dbReference>
<dbReference type="Reactome" id="R-RNO-375276">
    <property type="pathway name" value="Peptide ligand-binding receptors"/>
</dbReference>
<dbReference type="EvolutionaryTrace" id="P42676"/>
<dbReference type="PRO" id="PR:P42676"/>
<dbReference type="Proteomes" id="UP000002494">
    <property type="component" value="Unplaced"/>
</dbReference>
<dbReference type="GO" id="GO:0005829">
    <property type="term" value="C:cytosol"/>
    <property type="evidence" value="ECO:0000266"/>
    <property type="project" value="RGD"/>
</dbReference>
<dbReference type="GO" id="GO:0005758">
    <property type="term" value="C:mitochondrial intermembrane space"/>
    <property type="evidence" value="ECO:0000314"/>
    <property type="project" value="FlyBase"/>
</dbReference>
<dbReference type="GO" id="GO:0005739">
    <property type="term" value="C:mitochondrion"/>
    <property type="evidence" value="ECO:0000266"/>
    <property type="project" value="RGD"/>
</dbReference>
<dbReference type="GO" id="GO:0005886">
    <property type="term" value="C:plasma membrane"/>
    <property type="evidence" value="ECO:0000266"/>
    <property type="project" value="RGD"/>
</dbReference>
<dbReference type="GO" id="GO:0046872">
    <property type="term" value="F:metal ion binding"/>
    <property type="evidence" value="ECO:0007669"/>
    <property type="project" value="UniProtKB-KW"/>
</dbReference>
<dbReference type="GO" id="GO:0004222">
    <property type="term" value="F:metalloendopeptidase activity"/>
    <property type="evidence" value="ECO:0000314"/>
    <property type="project" value="RGD"/>
</dbReference>
<dbReference type="GO" id="GO:0070012">
    <property type="term" value="F:oligopeptidase activity"/>
    <property type="evidence" value="ECO:0000314"/>
    <property type="project" value="RGD"/>
</dbReference>
<dbReference type="GO" id="GO:0008233">
    <property type="term" value="F:peptidase activity"/>
    <property type="evidence" value="ECO:0000314"/>
    <property type="project" value="UniProtKB"/>
</dbReference>
<dbReference type="GO" id="GO:0042277">
    <property type="term" value="F:peptide binding"/>
    <property type="evidence" value="ECO:0000266"/>
    <property type="project" value="RGD"/>
</dbReference>
<dbReference type="GO" id="GO:0043171">
    <property type="term" value="P:peptide catabolic process"/>
    <property type="evidence" value="ECO:0000314"/>
    <property type="project" value="UniProtKB"/>
</dbReference>
<dbReference type="GO" id="GO:0006518">
    <property type="term" value="P:peptide metabolic process"/>
    <property type="evidence" value="ECO:0000318"/>
    <property type="project" value="GO_Central"/>
</dbReference>
<dbReference type="GO" id="GO:0030163">
    <property type="term" value="P:protein catabolic process"/>
    <property type="evidence" value="ECO:0000314"/>
    <property type="project" value="RGD"/>
</dbReference>
<dbReference type="GO" id="GO:0006508">
    <property type="term" value="P:proteolysis"/>
    <property type="evidence" value="ECO:0000318"/>
    <property type="project" value="GO_Central"/>
</dbReference>
<dbReference type="GO" id="GO:0006111">
    <property type="term" value="P:regulation of gluconeogenesis"/>
    <property type="evidence" value="ECO:0000266"/>
    <property type="project" value="RGD"/>
</dbReference>
<dbReference type="GO" id="GO:1902809">
    <property type="term" value="P:regulation of skeletal muscle fiber differentiation"/>
    <property type="evidence" value="ECO:0000266"/>
    <property type="project" value="RGD"/>
</dbReference>
<dbReference type="CDD" id="cd09605">
    <property type="entry name" value="M3A"/>
    <property type="match status" value="1"/>
</dbReference>
<dbReference type="FunFam" id="1.20.1050.40:FF:000001">
    <property type="entry name" value="Thimet oligopeptidase 1"/>
    <property type="match status" value="1"/>
</dbReference>
<dbReference type="FunFam" id="3.40.390.10:FF:000006">
    <property type="entry name" value="Thimet oligopeptidase 1"/>
    <property type="match status" value="1"/>
</dbReference>
<dbReference type="Gene3D" id="3.40.390.10">
    <property type="entry name" value="Collagenase (Catalytic Domain)"/>
    <property type="match status" value="1"/>
</dbReference>
<dbReference type="Gene3D" id="1.20.1050.40">
    <property type="entry name" value="Endopeptidase. Chain P, domain 1"/>
    <property type="match status" value="1"/>
</dbReference>
<dbReference type="Gene3D" id="1.10.1370.10">
    <property type="entry name" value="Neurolysin, domain 3"/>
    <property type="match status" value="1"/>
</dbReference>
<dbReference type="InterPro" id="IPR024079">
    <property type="entry name" value="MetalloPept_cat_dom_sf"/>
</dbReference>
<dbReference type="InterPro" id="IPR024077">
    <property type="entry name" value="Neurolysin/TOP_dom2"/>
</dbReference>
<dbReference type="InterPro" id="IPR024080">
    <property type="entry name" value="Neurolysin/TOP_N"/>
</dbReference>
<dbReference type="InterPro" id="IPR045090">
    <property type="entry name" value="Pept_M3A_M3B"/>
</dbReference>
<dbReference type="InterPro" id="IPR001567">
    <property type="entry name" value="Pept_M3A_M3B_dom"/>
</dbReference>
<dbReference type="PANTHER" id="PTHR11804:SF44">
    <property type="entry name" value="NEUROLYSIN, MITOCHONDRIAL"/>
    <property type="match status" value="1"/>
</dbReference>
<dbReference type="PANTHER" id="PTHR11804">
    <property type="entry name" value="PROTEASE M3 THIMET OLIGOPEPTIDASE-RELATED"/>
    <property type="match status" value="1"/>
</dbReference>
<dbReference type="Pfam" id="PF01432">
    <property type="entry name" value="Peptidase_M3"/>
    <property type="match status" value="1"/>
</dbReference>
<dbReference type="SUPFAM" id="SSF55486">
    <property type="entry name" value="Metalloproteases ('zincins'), catalytic domain"/>
    <property type="match status" value="1"/>
</dbReference>
<dbReference type="PROSITE" id="PS00142">
    <property type="entry name" value="ZINC_PROTEASE"/>
    <property type="match status" value="1"/>
</dbReference>
<name>NEUL_RAT</name>
<evidence type="ECO:0000250" key="1">
    <source>
        <dbReference type="UniProtKB" id="P52888"/>
    </source>
</evidence>
<evidence type="ECO:0000250" key="2">
    <source>
        <dbReference type="UniProtKB" id="Q9BYT8"/>
    </source>
</evidence>
<evidence type="ECO:0000255" key="3">
    <source>
        <dbReference type="PROSITE-ProRule" id="PRU10095"/>
    </source>
</evidence>
<evidence type="ECO:0000269" key="4">
    <source>
    </source>
</evidence>
<evidence type="ECO:0000269" key="5">
    <source>
    </source>
</evidence>
<evidence type="ECO:0000269" key="6">
    <source>
    </source>
</evidence>
<evidence type="ECO:0000305" key="7"/>
<evidence type="ECO:0007829" key="8">
    <source>
        <dbReference type="PDB" id="2O3E"/>
    </source>
</evidence>
<evidence type="ECO:0007829" key="9">
    <source>
        <dbReference type="PDB" id="4FXY"/>
    </source>
</evidence>
<protein>
    <recommendedName>
        <fullName>Neurolysin, mitochondrial</fullName>
        <ecNumber evidence="4 6">3.4.24.16</ecNumber>
    </recommendedName>
    <alternativeName>
        <fullName>Microsomal endopeptidase</fullName>
        <shortName>MEP</shortName>
    </alternativeName>
    <alternativeName>
        <fullName>Mitochondrial oligopeptidase M</fullName>
    </alternativeName>
    <alternativeName>
        <fullName>Neurotensin endopeptidase</fullName>
    </alternativeName>
</protein>
<organism>
    <name type="scientific">Rattus norvegicus</name>
    <name type="common">Rat</name>
    <dbReference type="NCBI Taxonomy" id="10116"/>
    <lineage>
        <taxon>Eukaryota</taxon>
        <taxon>Metazoa</taxon>
        <taxon>Chordata</taxon>
        <taxon>Craniata</taxon>
        <taxon>Vertebrata</taxon>
        <taxon>Euteleostomi</taxon>
        <taxon>Mammalia</taxon>
        <taxon>Eutheria</taxon>
        <taxon>Euarchontoglires</taxon>
        <taxon>Glires</taxon>
        <taxon>Rodentia</taxon>
        <taxon>Myomorpha</taxon>
        <taxon>Muroidea</taxon>
        <taxon>Muridae</taxon>
        <taxon>Murinae</taxon>
        <taxon>Rattus</taxon>
    </lineage>
</organism>
<comment type="function">
    <text evidence="4 5 6">Hydrolyzes oligopeptides such as neurotensin, bradykinin and dynorphin A (PubMed:7836437). Acts as a regulator of cannabinoid signaling pathway by mediating degradation of hemopressin, an antagonist peptide of the cannabinoid receptor CNR1 (PubMed:12500972, PubMed:18077343).</text>
</comment>
<comment type="catalytic activity">
    <reaction evidence="4 6">
        <text>Preferential cleavage in neurotensin: 10-Pro-|-Tyr-11.</text>
        <dbReference type="EC" id="3.4.24.16"/>
    </reaction>
</comment>
<comment type="cofactor">
    <cofactor evidence="1">
        <name>Zn(2+)</name>
        <dbReference type="ChEBI" id="CHEBI:29105"/>
    </cofactor>
    <text evidence="1">Binds 1 zinc ion per subunit.</text>
</comment>
<comment type="subcellular location">
    <subcellularLocation>
        <location evidence="6">Mitochondrion intermembrane space</location>
    </subcellularLocation>
    <subcellularLocation>
        <location evidence="6">Cytoplasm</location>
        <location evidence="6">Cytosol</location>
    </subcellularLocation>
</comment>
<comment type="similarity">
    <text evidence="7">Belongs to the peptidase M3 family.</text>
</comment>
<accession>P42676</accession>
<accession>Q6GQQ4</accession>
<proteinExistence type="evidence at protein level"/>
<reference key="1">
    <citation type="journal article" date="1995" name="J. Biol. Chem.">
        <title>Molecular cloning and expression of rat brain endopeptidase 3.4.24.16.</title>
        <authorList>
            <person name="Dauch P."/>
            <person name="Vincent J.-P."/>
            <person name="Checler F."/>
        </authorList>
    </citation>
    <scope>NUCLEOTIDE SEQUENCE [MRNA]</scope>
    <source>
        <strain>Sprague-Dawley</strain>
        <tissue>Brain</tissue>
    </source>
</reference>
<reference key="2">
    <citation type="journal article" date="2004" name="Genome Res.">
        <title>The status, quality, and expansion of the NIH full-length cDNA project: the Mammalian Gene Collection (MGC).</title>
        <authorList>
            <consortium name="The MGC Project Team"/>
        </authorList>
    </citation>
    <scope>NUCLEOTIDE SEQUENCE [LARGE SCALE MRNA]</scope>
    <source>
        <tissue>Lung</tissue>
    </source>
</reference>
<reference key="3">
    <citation type="journal article" date="1995" name="J. Biol. Chem.">
        <title>Characterization of a mitochondrial metallopeptidase reveals neurolysin as a homologue of thimet oligopeptidase.</title>
        <authorList>
            <person name="Serizawa A."/>
            <person name="Dando P.M."/>
            <person name="Barrett A.J."/>
        </authorList>
    </citation>
    <scope>PROTEIN SEQUENCE OF 38-57</scope>
    <scope>FUNCTION</scope>
    <scope>CATALYTIC ACTIVITY</scope>
    <scope>SUBCELLULAR LOCATION</scope>
    <source>
        <tissue>Liver</tissue>
    </source>
</reference>
<reference key="4">
    <citation type="journal article" date="2001" name="Proc. Natl. Acad. Sci. U.S.A.">
        <title>Structure of neurolysin reveals a deep channel that limits substrate access.</title>
        <authorList>
            <person name="Brown C.K."/>
            <person name="Madauss K."/>
            <person name="Lian W."/>
            <person name="Beck M.R."/>
            <person name="Tolbert W.D."/>
            <person name="Rodgers D.W."/>
        </authorList>
    </citation>
    <scope>X-RAY CRYSTALLOGRAPHY (2.3 ANGSTROMS)</scope>
</reference>
<reference key="5">
    <citation type="journal article" date="2003" name="J. Biol. Chem.">
        <title>Novel natural peptide substrates for endopeptidase 24.15, neurolysin, and angiotensin-converting enzyme.</title>
        <authorList>
            <person name="Rioli V."/>
            <person name="Gozzo F.C."/>
            <person name="Heimann A.S."/>
            <person name="Linardi A."/>
            <person name="Krieger J.E."/>
            <person name="Shida C.S."/>
            <person name="Almeida P.C."/>
            <person name="Hyslop S."/>
            <person name="Eberlin M.N."/>
            <person name="Ferro E.S."/>
        </authorList>
    </citation>
    <scope>FUNCTION</scope>
    <scope>CATALYTIC ACTIVITY</scope>
</reference>
<reference key="6">
    <citation type="journal article" date="2007" name="Proc. Natl. Acad. Sci. U.S.A.">
        <title>Hemopressin is an inverse agonist of CB1 cannabinoid receptors.</title>
        <authorList>
            <person name="Heimann A.S."/>
            <person name="Gomes I."/>
            <person name="Dale C.S."/>
            <person name="Pagano R.L."/>
            <person name="Gupta A."/>
            <person name="de Souza L.L."/>
            <person name="Luchessi A.D."/>
            <person name="Castro L.M."/>
            <person name="Giorgi R."/>
            <person name="Rioli V."/>
            <person name="Ferro E.S."/>
            <person name="Devi L.A."/>
        </authorList>
    </citation>
    <scope>FUNCTION</scope>
</reference>
<feature type="transit peptide" description="Mitochondrion" evidence="6">
    <location>
        <begin position="1"/>
        <end position="37"/>
    </location>
</feature>
<feature type="chain" id="PRO_0000028578" description="Neurolysin, mitochondrial">
    <location>
        <begin position="38"/>
        <end position="704"/>
    </location>
</feature>
<feature type="active site" evidence="3">
    <location>
        <position position="498"/>
    </location>
</feature>
<feature type="binding site" evidence="3">
    <location>
        <position position="497"/>
    </location>
    <ligand>
        <name>Zn(2+)</name>
        <dbReference type="ChEBI" id="CHEBI:29105"/>
        <note>catalytic</note>
    </ligand>
</feature>
<feature type="binding site" evidence="3">
    <location>
        <position position="501"/>
    </location>
    <ligand>
        <name>Zn(2+)</name>
        <dbReference type="ChEBI" id="CHEBI:29105"/>
        <note>catalytic</note>
    </ligand>
</feature>
<feature type="binding site" evidence="3">
    <location>
        <position position="504"/>
    </location>
    <ligand>
        <name>Zn(2+)</name>
        <dbReference type="ChEBI" id="CHEBI:29105"/>
        <note>catalytic</note>
    </ligand>
</feature>
<feature type="modified residue" description="N6-acetyllysine" evidence="2">
    <location>
        <position position="664"/>
    </location>
</feature>
<feature type="sequence conflict" description="In Ref. 2; AAH72687." evidence="7" ref="2">
    <original>K</original>
    <variation>R</variation>
    <location>
        <position position="128"/>
    </location>
</feature>
<feature type="turn" evidence="8">
    <location>
        <begin position="43"/>
        <end position="45"/>
    </location>
</feature>
<feature type="helix" evidence="8">
    <location>
        <begin position="54"/>
        <end position="75"/>
    </location>
</feature>
<feature type="helix" evidence="8">
    <location>
        <begin position="80"/>
        <end position="82"/>
    </location>
</feature>
<feature type="turn" evidence="8">
    <location>
        <begin position="85"/>
        <end position="88"/>
    </location>
</feature>
<feature type="helix" evidence="8">
    <location>
        <begin position="89"/>
        <end position="107"/>
    </location>
</feature>
<feature type="helix" evidence="8">
    <location>
        <begin position="109"/>
        <end position="112"/>
    </location>
</feature>
<feature type="helix" evidence="8">
    <location>
        <begin position="116"/>
        <end position="137"/>
    </location>
</feature>
<feature type="helix" evidence="8">
    <location>
        <begin position="140"/>
        <end position="152"/>
    </location>
</feature>
<feature type="helix" evidence="8">
    <location>
        <begin position="160"/>
        <end position="175"/>
    </location>
</feature>
<feature type="turn" evidence="8">
    <location>
        <begin position="176"/>
        <end position="179"/>
    </location>
</feature>
<feature type="helix" evidence="8">
    <location>
        <begin position="182"/>
        <end position="187"/>
    </location>
</feature>
<feature type="helix" evidence="8">
    <location>
        <begin position="189"/>
        <end position="208"/>
    </location>
</feature>
<feature type="strand" evidence="8">
    <location>
        <begin position="212"/>
        <end position="216"/>
    </location>
</feature>
<feature type="turn" evidence="8">
    <location>
        <begin position="217"/>
        <end position="222"/>
    </location>
</feature>
<feature type="helix" evidence="8">
    <location>
        <begin position="225"/>
        <end position="229"/>
    </location>
</feature>
<feature type="strand" evidence="9">
    <location>
        <begin position="231"/>
        <end position="233"/>
    </location>
</feature>
<feature type="strand" evidence="8">
    <location>
        <begin position="235"/>
        <end position="244"/>
    </location>
</feature>
<feature type="helix" evidence="8">
    <location>
        <begin position="245"/>
        <end position="254"/>
    </location>
</feature>
<feature type="helix" evidence="8">
    <location>
        <begin position="258"/>
        <end position="268"/>
    </location>
</feature>
<feature type="turn" evidence="8">
    <location>
        <begin position="269"/>
        <end position="272"/>
    </location>
</feature>
<feature type="helix" evidence="8">
    <location>
        <begin position="273"/>
        <end position="293"/>
    </location>
</feature>
<feature type="helix" evidence="8">
    <location>
        <begin position="299"/>
        <end position="304"/>
    </location>
</feature>
<feature type="helix" evidence="8">
    <location>
        <begin position="312"/>
        <end position="347"/>
    </location>
</feature>
<feature type="helix" evidence="8">
    <location>
        <begin position="358"/>
        <end position="360"/>
    </location>
</feature>
<feature type="helix" evidence="8">
    <location>
        <begin position="361"/>
        <end position="372"/>
    </location>
</feature>
<feature type="helix" evidence="8">
    <location>
        <begin position="377"/>
        <end position="380"/>
    </location>
</feature>
<feature type="helix" evidence="8">
    <location>
        <begin position="381"/>
        <end position="383"/>
    </location>
</feature>
<feature type="helix" evidence="8">
    <location>
        <begin position="386"/>
        <end position="401"/>
    </location>
</feature>
<feature type="strand" evidence="8">
    <location>
        <begin position="403"/>
        <end position="407"/>
    </location>
</feature>
<feature type="strand" evidence="8">
    <location>
        <begin position="419"/>
        <end position="425"/>
    </location>
</feature>
<feature type="turn" evidence="8">
    <location>
        <begin position="426"/>
        <end position="428"/>
    </location>
</feature>
<feature type="strand" evidence="8">
    <location>
        <begin position="431"/>
        <end position="438"/>
    </location>
</feature>
<feature type="strand" evidence="8">
    <location>
        <begin position="450"/>
        <end position="455"/>
    </location>
</feature>
<feature type="strand" evidence="8">
    <location>
        <begin position="468"/>
        <end position="473"/>
    </location>
</feature>
<feature type="strand" evidence="9">
    <location>
        <begin position="481"/>
        <end position="483"/>
    </location>
</feature>
<feature type="helix" evidence="8">
    <location>
        <begin position="489"/>
        <end position="507"/>
    </location>
</feature>
<feature type="strand" evidence="8">
    <location>
        <begin position="510"/>
        <end position="512"/>
    </location>
</feature>
<feature type="helix" evidence="8">
    <location>
        <begin position="513"/>
        <end position="515"/>
    </location>
</feature>
<feature type="turn" evidence="8">
    <location>
        <begin position="522"/>
        <end position="526"/>
    </location>
</feature>
<feature type="helix" evidence="8">
    <location>
        <begin position="527"/>
        <end position="533"/>
    </location>
</feature>
<feature type="helix" evidence="8">
    <location>
        <begin position="534"/>
        <end position="537"/>
    </location>
</feature>
<feature type="helix" evidence="8">
    <location>
        <begin position="539"/>
        <end position="545"/>
    </location>
</feature>
<feature type="strand" evidence="8">
    <location>
        <begin position="549"/>
        <end position="551"/>
    </location>
</feature>
<feature type="helix" evidence="8">
    <location>
        <begin position="557"/>
        <end position="565"/>
    </location>
</feature>
<feature type="turn" evidence="8">
    <location>
        <begin position="566"/>
        <end position="570"/>
    </location>
</feature>
<feature type="helix" evidence="8">
    <location>
        <begin position="571"/>
        <end position="588"/>
    </location>
</feature>
<feature type="helix" evidence="8">
    <location>
        <begin position="596"/>
        <end position="606"/>
    </location>
</feature>
<feature type="helix" evidence="8">
    <location>
        <begin position="618"/>
        <end position="621"/>
    </location>
</feature>
<feature type="strand" evidence="8">
    <location>
        <begin position="625"/>
        <end position="628"/>
    </location>
</feature>
<feature type="helix" evidence="8">
    <location>
        <begin position="635"/>
        <end position="649"/>
    </location>
</feature>
<feature type="helix" evidence="8">
    <location>
        <begin position="651"/>
        <end position="654"/>
    </location>
</feature>
<feature type="helix" evidence="8">
    <location>
        <begin position="659"/>
        <end position="669"/>
    </location>
</feature>
<feature type="turn" evidence="8">
    <location>
        <begin position="670"/>
        <end position="672"/>
    </location>
</feature>
<feature type="helix" evidence="8">
    <location>
        <begin position="673"/>
        <end position="675"/>
    </location>
</feature>
<feature type="helix" evidence="8">
    <location>
        <begin position="678"/>
        <end position="686"/>
    </location>
</feature>
<feature type="helix" evidence="8">
    <location>
        <begin position="693"/>
        <end position="699"/>
    </location>
</feature>
<sequence>MITLCLSTLRGLHRAGGSRLQLTMTLGKELASPLQAMSSYTAAGRNVLRWDLSPEQIKTRTEQLIAQTKQVYDTVGTIALKEVTYENCLQVLADIEVTYIVERTMLDFPQHVSSDREVRAASTEADKKLSRFDIEMSMREDVFQRIVHLQETCDLEKIKPEARRYLEKSIKMGKRNGLHLSEHIRNEIKSMKKRMSELCIDFNKNLNEDDTSLVFSKAELGALPDDFIDSLEKTDEDKYKVTLKYPHYFPVMKKCCVPETRRKMEMAFHTRCKQENTAILQQLLPLRAQVAKLLGYNTHADFVLELNTAKSTSRVAAFLDDLSQKLKPLGEAEREFILSLKKKECEERGFEYDGKINAWDLHYYMTQTEELKYSVDQESLKEYFPIEVVTEGLLSIYQELLGLSFEQVPDAHVWNKSVSLYTVKDKATGEVLGQFYLDLYPREGKYNHAACFGLQPGCLLPDGSRMMSVAALVVNFSQPVAGRPSLLRHDEVRTYFHEFGHVMHQICAQTDFARFSGTNVETDFVEVPSQMLENWVWDVDSLRKLSKHYKDGHPITDELLEKLVASRLVNTGLLTLRQIVLSKVDQSLHTNATLDAASEYAKYCTEILGVAATPGTNMPATFGHLAGGYDGQYYGYLWSEVFSMDMFHSCFKKEGIMNPEVGMKYRNLILKPGGSLDGMDMLQNFLQREPNQKAFLMSRGLNGS</sequence>
<keyword id="KW-0002">3D-structure</keyword>
<keyword id="KW-0007">Acetylation</keyword>
<keyword id="KW-0963">Cytoplasm</keyword>
<keyword id="KW-0903">Direct protein sequencing</keyword>
<keyword id="KW-0378">Hydrolase</keyword>
<keyword id="KW-0479">Metal-binding</keyword>
<keyword id="KW-0482">Metalloprotease</keyword>
<keyword id="KW-0496">Mitochondrion</keyword>
<keyword id="KW-0645">Protease</keyword>
<keyword id="KW-1185">Reference proteome</keyword>
<keyword id="KW-0809">Transit peptide</keyword>
<keyword id="KW-0862">Zinc</keyword>
<gene>
    <name type="primary">Nln</name>
</gene>